<protein>
    <recommendedName>
        <fullName evidence="1">Phosphomethylpyrimidine synthase</fullName>
        <ecNumber evidence="1">4.1.99.17</ecNumber>
    </recommendedName>
    <alternativeName>
        <fullName evidence="1">Hydroxymethylpyrimidine phosphate synthase</fullName>
        <shortName evidence="1">HMP-P synthase</shortName>
        <shortName evidence="1">HMP-phosphate synthase</shortName>
        <shortName evidence="1">HMPP synthase</shortName>
    </alternativeName>
    <alternativeName>
        <fullName evidence="1">Thiamine biosynthesis protein ThiC</fullName>
    </alternativeName>
</protein>
<dbReference type="EC" id="4.1.99.17" evidence="1"/>
<dbReference type="EMBL" id="CP000124">
    <property type="protein sequence ID" value="ABA47815.1"/>
    <property type="molecule type" value="Genomic_DNA"/>
</dbReference>
<dbReference type="RefSeq" id="WP_004521865.1">
    <property type="nucleotide sequence ID" value="NC_007434.1"/>
</dbReference>
<dbReference type="SMR" id="Q3JU20"/>
<dbReference type="EnsemblBacteria" id="ABA47815">
    <property type="protein sequence ID" value="ABA47815"/>
    <property type="gene ID" value="BURPS1710b_1528"/>
</dbReference>
<dbReference type="GeneID" id="93059779"/>
<dbReference type="KEGG" id="bpm:BURPS1710b_1528"/>
<dbReference type="HOGENOM" id="CLU_013181_2_1_4"/>
<dbReference type="UniPathway" id="UPA00060"/>
<dbReference type="Proteomes" id="UP000002700">
    <property type="component" value="Chromosome I"/>
</dbReference>
<dbReference type="GO" id="GO:0005829">
    <property type="term" value="C:cytosol"/>
    <property type="evidence" value="ECO:0007669"/>
    <property type="project" value="TreeGrafter"/>
</dbReference>
<dbReference type="GO" id="GO:0051539">
    <property type="term" value="F:4 iron, 4 sulfur cluster binding"/>
    <property type="evidence" value="ECO:0007669"/>
    <property type="project" value="UniProtKB-KW"/>
</dbReference>
<dbReference type="GO" id="GO:0016830">
    <property type="term" value="F:carbon-carbon lyase activity"/>
    <property type="evidence" value="ECO:0007669"/>
    <property type="project" value="InterPro"/>
</dbReference>
<dbReference type="GO" id="GO:0008270">
    <property type="term" value="F:zinc ion binding"/>
    <property type="evidence" value="ECO:0007669"/>
    <property type="project" value="UniProtKB-UniRule"/>
</dbReference>
<dbReference type="GO" id="GO:0009228">
    <property type="term" value="P:thiamine biosynthetic process"/>
    <property type="evidence" value="ECO:0007669"/>
    <property type="project" value="UniProtKB-KW"/>
</dbReference>
<dbReference type="GO" id="GO:0009229">
    <property type="term" value="P:thiamine diphosphate biosynthetic process"/>
    <property type="evidence" value="ECO:0007669"/>
    <property type="project" value="UniProtKB-UniRule"/>
</dbReference>
<dbReference type="FunFam" id="3.20.20.540:FF:000001">
    <property type="entry name" value="Phosphomethylpyrimidine synthase"/>
    <property type="match status" value="1"/>
</dbReference>
<dbReference type="Gene3D" id="6.10.250.620">
    <property type="match status" value="1"/>
</dbReference>
<dbReference type="Gene3D" id="3.20.20.540">
    <property type="entry name" value="Radical SAM ThiC family, central domain"/>
    <property type="match status" value="1"/>
</dbReference>
<dbReference type="HAMAP" id="MF_00089">
    <property type="entry name" value="ThiC"/>
    <property type="match status" value="1"/>
</dbReference>
<dbReference type="InterPro" id="IPR037509">
    <property type="entry name" value="ThiC"/>
</dbReference>
<dbReference type="InterPro" id="IPR025747">
    <property type="entry name" value="ThiC-associated_dom"/>
</dbReference>
<dbReference type="InterPro" id="IPR038521">
    <property type="entry name" value="ThiC/Bza_core_dom"/>
</dbReference>
<dbReference type="InterPro" id="IPR002817">
    <property type="entry name" value="ThiC/BzaA/B"/>
</dbReference>
<dbReference type="NCBIfam" id="NF006763">
    <property type="entry name" value="PRK09284.1"/>
    <property type="match status" value="1"/>
</dbReference>
<dbReference type="NCBIfam" id="NF009895">
    <property type="entry name" value="PRK13352.1"/>
    <property type="match status" value="1"/>
</dbReference>
<dbReference type="NCBIfam" id="TIGR00190">
    <property type="entry name" value="thiC"/>
    <property type="match status" value="1"/>
</dbReference>
<dbReference type="PANTHER" id="PTHR30557:SF1">
    <property type="entry name" value="PHOSPHOMETHYLPYRIMIDINE SYNTHASE, CHLOROPLASTIC"/>
    <property type="match status" value="1"/>
</dbReference>
<dbReference type="PANTHER" id="PTHR30557">
    <property type="entry name" value="THIAMINE BIOSYNTHESIS PROTEIN THIC"/>
    <property type="match status" value="1"/>
</dbReference>
<dbReference type="Pfam" id="PF13667">
    <property type="entry name" value="ThiC-associated"/>
    <property type="match status" value="1"/>
</dbReference>
<dbReference type="Pfam" id="PF01964">
    <property type="entry name" value="ThiC_Rad_SAM"/>
    <property type="match status" value="1"/>
</dbReference>
<dbReference type="SFLD" id="SFLDF00407">
    <property type="entry name" value="phosphomethylpyrimidine_syntha"/>
    <property type="match status" value="1"/>
</dbReference>
<dbReference type="SFLD" id="SFLDG01114">
    <property type="entry name" value="phosphomethylpyrimidine_syntha"/>
    <property type="match status" value="1"/>
</dbReference>
<dbReference type="SFLD" id="SFLDS00113">
    <property type="entry name" value="Radical_SAM_Phosphomethylpyrim"/>
    <property type="match status" value="1"/>
</dbReference>
<organism>
    <name type="scientific">Burkholderia pseudomallei (strain 1710b)</name>
    <dbReference type="NCBI Taxonomy" id="320372"/>
    <lineage>
        <taxon>Bacteria</taxon>
        <taxon>Pseudomonadati</taxon>
        <taxon>Pseudomonadota</taxon>
        <taxon>Betaproteobacteria</taxon>
        <taxon>Burkholderiales</taxon>
        <taxon>Burkholderiaceae</taxon>
        <taxon>Burkholderia</taxon>
        <taxon>pseudomallei group</taxon>
    </lineage>
</organism>
<evidence type="ECO:0000255" key="1">
    <source>
        <dbReference type="HAMAP-Rule" id="MF_00089"/>
    </source>
</evidence>
<reference key="1">
    <citation type="journal article" date="2010" name="Genome Biol. Evol.">
        <title>Continuing evolution of Burkholderia mallei through genome reduction and large-scale rearrangements.</title>
        <authorList>
            <person name="Losada L."/>
            <person name="Ronning C.M."/>
            <person name="DeShazer D."/>
            <person name="Woods D."/>
            <person name="Fedorova N."/>
            <person name="Kim H.S."/>
            <person name="Shabalina S.A."/>
            <person name="Pearson T.R."/>
            <person name="Brinkac L."/>
            <person name="Tan P."/>
            <person name="Nandi T."/>
            <person name="Crabtree J."/>
            <person name="Badger J."/>
            <person name="Beckstrom-Sternberg S."/>
            <person name="Saqib M."/>
            <person name="Schutzer S.E."/>
            <person name="Keim P."/>
            <person name="Nierman W.C."/>
        </authorList>
    </citation>
    <scope>NUCLEOTIDE SEQUENCE [LARGE SCALE GENOMIC DNA]</scope>
    <source>
        <strain>1710b</strain>
    </source>
</reference>
<comment type="function">
    <text evidence="1">Catalyzes the synthesis of the hydroxymethylpyrimidine phosphate (HMP-P) moiety of thiamine from aminoimidazole ribotide (AIR) in a radical S-adenosyl-L-methionine (SAM)-dependent reaction.</text>
</comment>
<comment type="catalytic activity">
    <reaction evidence="1">
        <text>5-amino-1-(5-phospho-beta-D-ribosyl)imidazole + S-adenosyl-L-methionine = 4-amino-2-methyl-5-(phosphooxymethyl)pyrimidine + CO + 5'-deoxyadenosine + formate + L-methionine + 3 H(+)</text>
        <dbReference type="Rhea" id="RHEA:24840"/>
        <dbReference type="ChEBI" id="CHEBI:15378"/>
        <dbReference type="ChEBI" id="CHEBI:15740"/>
        <dbReference type="ChEBI" id="CHEBI:17245"/>
        <dbReference type="ChEBI" id="CHEBI:17319"/>
        <dbReference type="ChEBI" id="CHEBI:57844"/>
        <dbReference type="ChEBI" id="CHEBI:58354"/>
        <dbReference type="ChEBI" id="CHEBI:59789"/>
        <dbReference type="ChEBI" id="CHEBI:137981"/>
        <dbReference type="EC" id="4.1.99.17"/>
    </reaction>
</comment>
<comment type="cofactor">
    <cofactor evidence="1">
        <name>[4Fe-4S] cluster</name>
        <dbReference type="ChEBI" id="CHEBI:49883"/>
    </cofactor>
    <text evidence="1">Binds 1 [4Fe-4S] cluster per subunit. The cluster is coordinated with 3 cysteines and an exchangeable S-adenosyl-L-methionine.</text>
</comment>
<comment type="pathway">
    <text evidence="1">Cofactor biosynthesis; thiamine diphosphate biosynthesis.</text>
</comment>
<comment type="subunit">
    <text evidence="1">Homodimer.</text>
</comment>
<comment type="similarity">
    <text evidence="1">Belongs to the ThiC family.</text>
</comment>
<gene>
    <name evidence="1" type="primary">thiC</name>
    <name type="ordered locus">BURPS1710b_1528</name>
</gene>
<accession>Q3JU20</accession>
<proteinExistence type="inferred from homology"/>
<feature type="chain" id="PRO_0000242247" description="Phosphomethylpyrimidine synthase">
    <location>
        <begin position="1"/>
        <end position="643"/>
    </location>
</feature>
<feature type="binding site" evidence="1">
    <location>
        <position position="248"/>
    </location>
    <ligand>
        <name>substrate</name>
    </ligand>
</feature>
<feature type="binding site" evidence="1">
    <location>
        <position position="277"/>
    </location>
    <ligand>
        <name>substrate</name>
    </ligand>
</feature>
<feature type="binding site" evidence="1">
    <location>
        <position position="306"/>
    </location>
    <ligand>
        <name>substrate</name>
    </ligand>
</feature>
<feature type="binding site" evidence="1">
    <location>
        <position position="342"/>
    </location>
    <ligand>
        <name>substrate</name>
    </ligand>
</feature>
<feature type="binding site" evidence="1">
    <location>
        <begin position="362"/>
        <end position="364"/>
    </location>
    <ligand>
        <name>substrate</name>
    </ligand>
</feature>
<feature type="binding site" evidence="1">
    <location>
        <begin position="403"/>
        <end position="406"/>
    </location>
    <ligand>
        <name>substrate</name>
    </ligand>
</feature>
<feature type="binding site" evidence="1">
    <location>
        <position position="442"/>
    </location>
    <ligand>
        <name>substrate</name>
    </ligand>
</feature>
<feature type="binding site" evidence="1">
    <location>
        <position position="446"/>
    </location>
    <ligand>
        <name>Zn(2+)</name>
        <dbReference type="ChEBI" id="CHEBI:29105"/>
    </ligand>
</feature>
<feature type="binding site" evidence="1">
    <location>
        <position position="469"/>
    </location>
    <ligand>
        <name>substrate</name>
    </ligand>
</feature>
<feature type="binding site" evidence="1">
    <location>
        <position position="510"/>
    </location>
    <ligand>
        <name>Zn(2+)</name>
        <dbReference type="ChEBI" id="CHEBI:29105"/>
    </ligand>
</feature>
<feature type="binding site" evidence="1">
    <location>
        <position position="590"/>
    </location>
    <ligand>
        <name>[4Fe-4S] cluster</name>
        <dbReference type="ChEBI" id="CHEBI:49883"/>
        <note>4Fe-4S-S-AdoMet</note>
    </ligand>
</feature>
<feature type="binding site" evidence="1">
    <location>
        <position position="593"/>
    </location>
    <ligand>
        <name>[4Fe-4S] cluster</name>
        <dbReference type="ChEBI" id="CHEBI:49883"/>
        <note>4Fe-4S-S-AdoMet</note>
    </ligand>
</feature>
<feature type="binding site" evidence="1">
    <location>
        <position position="598"/>
    </location>
    <ligand>
        <name>[4Fe-4S] cluster</name>
        <dbReference type="ChEBI" id="CHEBI:49883"/>
        <note>4Fe-4S-S-AdoMet</note>
    </ligand>
</feature>
<name>THIC_BURP1</name>
<sequence length="643" mass="71124">MNANPKFLSADARVDAAAVAPLPNSRKVYVTGSQPDIRVPMREITQADTPTSFGGEKNPPIYVYDTSGPYTDPDAKIDIRAGLPALRQRWIDARGDTETLAGLTSDYGRERAADPATAELRFPGLHRHPRRAKAGKNVTQMHYARQGIITPEMEYIAIRENQRRAEYLESLKASGPNGAKLAAMMGRQHAGQAFGAAAFGANAPAEITPEFVRDEVARGRAIIPANINHPETEPMIIGRNFLVKINANIGNSAVTSSIGEEVDKMTWAIRWGGDTVMDLSTGKHIHETREWIIRNSPVPIGTVPIYQALEKVNGKAEDLTWEIFRDTLIEQAEQGVDYFTIHAGVRLQYVPLTANRMTGIVSRGGSIMAKWCLAHHKESFLYEHFEEICEIMKAYDVSFSLGDGLRPGSIYDANDEAQLGELKTLGELTQIAWKHDVQVMIEGPGHVPMQLIKENMDLQLDWCKEAPFYTLGPLTTDIAPGYDHITSGIGAAMIGWFGTAMLCYVTPKEHLGLPNKDDVKEGIITYKLAAHAADLAKGHPGAQVRDNALSKARFEFRWQDQFNLGLDPDKAREFHDETLPKDSAKVAHFCSMCGPHFCSMKITQDVREFAAQQGVSENDALKKGMEVKAVEFVKSGSEIYHRQ</sequence>
<keyword id="KW-0004">4Fe-4S</keyword>
<keyword id="KW-0408">Iron</keyword>
<keyword id="KW-0411">Iron-sulfur</keyword>
<keyword id="KW-0456">Lyase</keyword>
<keyword id="KW-0479">Metal-binding</keyword>
<keyword id="KW-0949">S-adenosyl-L-methionine</keyword>
<keyword id="KW-0784">Thiamine biosynthesis</keyword>
<keyword id="KW-0862">Zinc</keyword>